<geneLocation type="plasmid" evidence="6">
    <name>pLW1071</name>
</geneLocation>
<reference key="1">
    <citation type="journal article" date="2007" name="Proc. Natl. Acad. Sci. U.S.A.">
        <title>Genome and proteome of long-chain alkane degrading Geobacillus thermodenitrificans NG80-2 isolated from a deep-subsurface oil reservoir.</title>
        <authorList>
            <person name="Feng L."/>
            <person name="Wang W."/>
            <person name="Cheng J."/>
            <person name="Ren Y."/>
            <person name="Zhao G."/>
            <person name="Gao C."/>
            <person name="Tang Y."/>
            <person name="Liu X."/>
            <person name="Han W."/>
            <person name="Peng X."/>
            <person name="Liu R."/>
            <person name="Wang L."/>
        </authorList>
    </citation>
    <scope>NUCLEOTIDE SEQUENCE [LARGE SCALE GENOMIC DNA]</scope>
    <scope>FUNCTION</scope>
    <scope>CATALYTIC ACTIVITY</scope>
    <scope>SUBCELLULAR LOCATION</scope>
    <scope>INDUCTION</scope>
    <scope>BIOTECHNOLOGY</scope>
    <source>
        <strain>NG80-2</strain>
    </source>
</reference>
<reference key="2">
    <citation type="journal article" date="2012" name="Appl. Microbiol. Biotechnol.">
        <title>Engineering of LadA for enhanced hexadecane oxidation using random- and site-directed mutagenesis.</title>
        <authorList>
            <person name="Dong Y."/>
            <person name="Yan J."/>
            <person name="Du H."/>
            <person name="Chen M."/>
            <person name="Ma T."/>
            <person name="Feng L."/>
        </authorList>
    </citation>
    <scope>FUNCTION</scope>
    <scope>CATALYTIC ACTIVITY</scope>
    <scope>BIOPHYSICOCHEMICAL PROPERTIES</scope>
    <scope>BIOTECHNOLOGY</scope>
    <scope>MUTAGENESIS OF ALA-102; PHE-146; LEU-320 AND ASN-376</scope>
    <source>
        <strain>NG80-2</strain>
    </source>
</reference>
<reference evidence="7 8" key="3">
    <citation type="journal article" date="2008" name="J. Mol. Biol.">
        <title>Crystal structure of long-chain alkane monooxygenase (LadA) in complex with coenzyme FMN: unveiling the long-chain alkane hydroxylase.</title>
        <authorList>
            <person name="Li L."/>
            <person name="Liu X."/>
            <person name="Yang W."/>
            <person name="Xu F."/>
            <person name="Wang W."/>
            <person name="Feng L."/>
            <person name="Bartlam M."/>
            <person name="Wang L."/>
            <person name="Rao Z."/>
        </authorList>
    </citation>
    <scope>X-RAY CRYSTALLOGRAPHY (1.90 ANGSTROMS) OF APOENZYME AND IN COMPLEX WITH FMN</scope>
    <scope>CATALYTIC ACTIVITY</scope>
    <scope>SUBUNIT</scope>
    <scope>MUTAGENESIS OF CYS-14; HIS-17; TYR-63; GLN-79 AND HIS-311</scope>
</reference>
<name>LADA_GEOTN</name>
<dbReference type="EC" id="1.14.14.28" evidence="1 2 3"/>
<dbReference type="EMBL" id="CP000558">
    <property type="protein sequence ID" value="ABO68832.1"/>
    <property type="molecule type" value="Genomic_DNA"/>
</dbReference>
<dbReference type="RefSeq" id="WP_011888513.1">
    <property type="nucleotide sequence ID" value="NC_009329.1"/>
</dbReference>
<dbReference type="PDB" id="3B9N">
    <property type="method" value="X-ray"/>
    <property type="resolution" value="2.70 A"/>
    <property type="chains" value="A/B=1-440"/>
</dbReference>
<dbReference type="PDB" id="3B9O">
    <property type="method" value="X-ray"/>
    <property type="resolution" value="1.90 A"/>
    <property type="chains" value="A/B=1-440"/>
</dbReference>
<dbReference type="PDBsum" id="3B9N"/>
<dbReference type="PDBsum" id="3B9O"/>
<dbReference type="SMR" id="A4IU28"/>
<dbReference type="KEGG" id="gtn:GTNG_3499"/>
<dbReference type="eggNOG" id="COG2141">
    <property type="taxonomic scope" value="Bacteria"/>
</dbReference>
<dbReference type="HOGENOM" id="CLU_022256_0_0_9"/>
<dbReference type="BRENDA" id="1.14.14.28">
    <property type="organism ID" value="705"/>
</dbReference>
<dbReference type="SABIO-RK" id="A4IU28"/>
<dbReference type="EvolutionaryTrace" id="A4IU28"/>
<dbReference type="Proteomes" id="UP000001578">
    <property type="component" value="Plasmid pLW1071"/>
</dbReference>
<dbReference type="GO" id="GO:0005576">
    <property type="term" value="C:extracellular region"/>
    <property type="evidence" value="ECO:0007669"/>
    <property type="project" value="UniProtKB-SubCell"/>
</dbReference>
<dbReference type="GO" id="GO:0004497">
    <property type="term" value="F:monooxygenase activity"/>
    <property type="evidence" value="ECO:0007669"/>
    <property type="project" value="UniProtKB-KW"/>
</dbReference>
<dbReference type="GO" id="GO:0000166">
    <property type="term" value="F:nucleotide binding"/>
    <property type="evidence" value="ECO:0007669"/>
    <property type="project" value="UniProtKB-KW"/>
</dbReference>
<dbReference type="GO" id="GO:0016705">
    <property type="term" value="F:oxidoreductase activity, acting on paired donors, with incorporation or reduction of molecular oxygen"/>
    <property type="evidence" value="ECO:0007669"/>
    <property type="project" value="InterPro"/>
</dbReference>
<dbReference type="CDD" id="cd01095">
    <property type="entry name" value="Nitrilotriacetate_monoxgenase"/>
    <property type="match status" value="1"/>
</dbReference>
<dbReference type="Gene3D" id="3.20.20.30">
    <property type="entry name" value="Luciferase-like domain"/>
    <property type="match status" value="1"/>
</dbReference>
<dbReference type="InterPro" id="IPR051260">
    <property type="entry name" value="Diverse_substr_monoxygenases"/>
</dbReference>
<dbReference type="InterPro" id="IPR011251">
    <property type="entry name" value="Luciferase-like_dom"/>
</dbReference>
<dbReference type="InterPro" id="IPR036661">
    <property type="entry name" value="Luciferase-like_sf"/>
</dbReference>
<dbReference type="InterPro" id="IPR016215">
    <property type="entry name" value="NTA_MOA"/>
</dbReference>
<dbReference type="NCBIfam" id="TIGR03860">
    <property type="entry name" value="FMN_nitrolo"/>
    <property type="match status" value="1"/>
</dbReference>
<dbReference type="PANTHER" id="PTHR30011">
    <property type="entry name" value="ALKANESULFONATE MONOOXYGENASE-RELATED"/>
    <property type="match status" value="1"/>
</dbReference>
<dbReference type="PANTHER" id="PTHR30011:SF16">
    <property type="entry name" value="C2H2 FINGER DOMAIN TRANSCRIPTION FACTOR (EUROFUNG)-RELATED"/>
    <property type="match status" value="1"/>
</dbReference>
<dbReference type="Pfam" id="PF00296">
    <property type="entry name" value="Bac_luciferase"/>
    <property type="match status" value="1"/>
</dbReference>
<dbReference type="PIRSF" id="PIRSF000337">
    <property type="entry name" value="NTA_MOA"/>
    <property type="match status" value="1"/>
</dbReference>
<dbReference type="SUPFAM" id="SSF51679">
    <property type="entry name" value="Bacterial luciferase-like"/>
    <property type="match status" value="1"/>
</dbReference>
<gene>
    <name evidence="4" type="primary">ladA</name>
    <name evidence="6" type="ordered locus">GTNG_3499</name>
</gene>
<evidence type="ECO:0000269" key="1">
    <source>
    </source>
</evidence>
<evidence type="ECO:0000269" key="2">
    <source>
    </source>
</evidence>
<evidence type="ECO:0000269" key="3">
    <source>
    </source>
</evidence>
<evidence type="ECO:0000303" key="4">
    <source>
    </source>
</evidence>
<evidence type="ECO:0000305" key="5"/>
<evidence type="ECO:0000312" key="6">
    <source>
        <dbReference type="EMBL" id="ABO68832.1"/>
    </source>
</evidence>
<evidence type="ECO:0007744" key="7">
    <source>
        <dbReference type="PDB" id="3B9N"/>
    </source>
</evidence>
<evidence type="ECO:0007744" key="8">
    <source>
        <dbReference type="PDB" id="3B9O"/>
    </source>
</evidence>
<evidence type="ECO:0007829" key="9">
    <source>
        <dbReference type="PDB" id="3B9O"/>
    </source>
</evidence>
<feature type="chain" id="PRO_0000454161" description="Long-chain alkane monooxygenase">
    <location>
        <begin position="1"/>
        <end position="440"/>
    </location>
</feature>
<feature type="binding site" evidence="2 8">
    <location>
        <position position="58"/>
    </location>
    <ligand>
        <name>FMN</name>
        <dbReference type="ChEBI" id="CHEBI:58210"/>
    </ligand>
</feature>
<feature type="binding site" evidence="2 8">
    <location>
        <begin position="137"/>
        <end position="138"/>
    </location>
    <ligand>
        <name>FMN</name>
        <dbReference type="ChEBI" id="CHEBI:58210"/>
    </ligand>
</feature>
<feature type="binding site" evidence="2 8">
    <location>
        <position position="158"/>
    </location>
    <ligand>
        <name>FMN</name>
        <dbReference type="ChEBI" id="CHEBI:58210"/>
    </ligand>
</feature>
<feature type="binding site" evidence="2 8">
    <location>
        <begin position="227"/>
        <end position="230"/>
    </location>
    <ligand>
        <name>FMN</name>
        <dbReference type="ChEBI" id="CHEBI:58210"/>
    </ligand>
</feature>
<feature type="mutagenesis site" description="Loss of activity. Prevents dimerization." evidence="2">
    <original>C</original>
    <variation>A</variation>
    <location>
        <position position="14"/>
    </location>
</feature>
<feature type="mutagenesis site" description="Loss of activity. Can still form dimers." evidence="2">
    <original>H</original>
    <variation>F</variation>
    <location>
        <position position="17"/>
    </location>
</feature>
<feature type="mutagenesis site" description="Loss of activity. Can still form dimers." evidence="2">
    <original>Y</original>
    <variation>F</variation>
    <location>
        <position position="63"/>
    </location>
</feature>
<feature type="mutagenesis site" description="Loss of activity. Can still form dimers." evidence="2">
    <original>Q</original>
    <variation>L</variation>
    <location>
        <position position="79"/>
    </location>
</feature>
<feature type="mutagenesis site" description="2.1-fold increase in activity toward hexadecane. Uses a narrower spectrum of n-alkanes." evidence="3">
    <original>A</original>
    <variation>D</variation>
    <location>
        <position position="102"/>
    </location>
</feature>
<feature type="mutagenesis site" description="2.2-fold increase in activity toward hexadecane." evidence="3">
    <original>A</original>
    <variation>E</variation>
    <location>
        <position position="102"/>
    </location>
</feature>
<feature type="mutagenesis site" description="Loss of activity with hexadecane as substrate. 2.9-fold increase in activity toward hexadecane; when associated with I-376." evidence="3">
    <original>F</original>
    <variation>C</variation>
    <location>
        <position position="146"/>
    </location>
</feature>
<feature type="mutagenesis site" description="2.0-fold increase in activity toward hexadecane; when associated with I-376." evidence="3">
    <original>F</original>
    <variation>E</variation>
    <location>
        <position position="146"/>
    </location>
</feature>
<feature type="mutagenesis site" description="3.4-fold increase in activity toward hexadecane; when associated with I-376." evidence="3">
    <original>F</original>
    <variation>N</variation>
    <location>
        <position position="146"/>
    </location>
</feature>
<feature type="mutagenesis site" description="2.3-fold increase in activity toward hexadecane; when associated with I-376." evidence="3">
    <original>F</original>
    <variation>Q</variation>
    <location>
        <position position="146"/>
    </location>
</feature>
<feature type="mutagenesis site" description="2.5-fold increase in activity toward hexadecane; when associated with I-376." evidence="3">
    <original>F</original>
    <variation>R</variation>
    <location>
        <position position="146"/>
    </location>
</feature>
<feature type="mutagenesis site" description="Loss of activity. Can still form dimers." evidence="2">
    <original>H</original>
    <variation>F</variation>
    <location>
        <position position="311"/>
    </location>
</feature>
<feature type="mutagenesis site" description="2.2-fold increase in activity toward hexadecane. Uses a narrower spectrum of n-alkanes." evidence="3">
    <original>L</original>
    <variation>A</variation>
    <location>
        <position position="320"/>
    </location>
</feature>
<feature type="mutagenesis site" description="2.5-fold increase in activity toward hexadecane." evidence="3">
    <original>L</original>
    <variation>V</variation>
    <location>
        <position position="320"/>
    </location>
</feature>
<feature type="mutagenesis site" description="Loss of activity with hexadecane as substrate. 2.9-fold increase in activity toward hexadecane; when associated with C-146. 2.0-fold increase in activity toward hexadecane; when associated with E-146. 3.4-fold increase in activity toward hexadecane; when associated with N-146. 2.3-fold increase in activity toward hexadecane; when associated with Q-146. 2.5-fold increase in activity toward hexadecane; when associated with R-146." evidence="3">
    <original>N</original>
    <variation>I</variation>
    <location>
        <position position="376"/>
    </location>
</feature>
<feature type="strand" evidence="9">
    <location>
        <begin position="6"/>
        <end position="19"/>
    </location>
</feature>
<feature type="helix" evidence="9">
    <location>
        <begin position="22"/>
        <end position="24"/>
    </location>
</feature>
<feature type="helix" evidence="9">
    <location>
        <begin position="30"/>
        <end position="34"/>
    </location>
</feature>
<feature type="helix" evidence="9">
    <location>
        <begin position="36"/>
        <end position="48"/>
    </location>
</feature>
<feature type="strand" evidence="9">
    <location>
        <begin position="52"/>
        <end position="57"/>
    </location>
</feature>
<feature type="helix" evidence="9">
    <location>
        <begin position="66"/>
        <end position="68"/>
    </location>
</feature>
<feature type="helix" evidence="9">
    <location>
        <begin position="71"/>
        <end position="75"/>
    </location>
</feature>
<feature type="helix" evidence="9">
    <location>
        <begin position="86"/>
        <end position="88"/>
    </location>
</feature>
<feature type="helix" evidence="9">
    <location>
        <begin position="89"/>
        <end position="94"/>
    </location>
</feature>
<feature type="strand" evidence="9">
    <location>
        <begin position="100"/>
        <end position="110"/>
    </location>
</feature>
<feature type="helix" evidence="9">
    <location>
        <begin position="112"/>
        <end position="125"/>
    </location>
</feature>
<feature type="strand" evidence="9">
    <location>
        <begin position="130"/>
        <end position="135"/>
    </location>
</feature>
<feature type="helix" evidence="9">
    <location>
        <begin position="140"/>
        <end position="145"/>
    </location>
</feature>
<feature type="helix" evidence="9">
    <location>
        <begin position="154"/>
        <end position="173"/>
    </location>
</feature>
<feature type="strand" evidence="9">
    <location>
        <begin position="181"/>
        <end position="184"/>
    </location>
</feature>
<feature type="turn" evidence="9">
    <location>
        <begin position="185"/>
        <end position="188"/>
    </location>
</feature>
<feature type="strand" evidence="9">
    <location>
        <begin position="189"/>
        <end position="191"/>
    </location>
</feature>
<feature type="helix" evidence="9">
    <location>
        <begin position="193"/>
        <end position="195"/>
    </location>
</feature>
<feature type="strand" evidence="9">
    <location>
        <begin position="218"/>
        <end position="221"/>
    </location>
</feature>
<feature type="strand" evidence="9">
    <location>
        <begin position="223"/>
        <end position="227"/>
    </location>
</feature>
<feature type="helix" evidence="9">
    <location>
        <begin position="231"/>
        <end position="240"/>
    </location>
</feature>
<feature type="strand" evidence="9">
    <location>
        <begin position="242"/>
        <end position="246"/>
    </location>
</feature>
<feature type="strand" evidence="9">
    <location>
        <begin position="248"/>
        <end position="250"/>
    </location>
</feature>
<feature type="helix" evidence="9">
    <location>
        <begin position="251"/>
        <end position="265"/>
    </location>
</feature>
<feature type="helix" evidence="9">
    <location>
        <begin position="266"/>
        <end position="268"/>
    </location>
</feature>
<feature type="helix" evidence="9">
    <location>
        <begin position="272"/>
        <end position="274"/>
    </location>
</feature>
<feature type="strand" evidence="9">
    <location>
        <begin position="275"/>
        <end position="285"/>
    </location>
</feature>
<feature type="helix" evidence="9">
    <location>
        <begin position="289"/>
        <end position="302"/>
    </location>
</feature>
<feature type="helix" evidence="9">
    <location>
        <begin position="305"/>
        <end position="316"/>
    </location>
</feature>
<feature type="helix" evidence="9">
    <location>
        <begin position="320"/>
        <end position="322"/>
    </location>
</feature>
<feature type="strand" evidence="9">
    <location>
        <begin position="328"/>
        <end position="333"/>
    </location>
</feature>
<feature type="helix" evidence="9">
    <location>
        <begin position="334"/>
        <end position="341"/>
    </location>
</feature>
<feature type="strand" evidence="9">
    <location>
        <begin position="347"/>
        <end position="354"/>
    </location>
</feature>
<feature type="helix" evidence="9">
    <location>
        <begin position="356"/>
        <end position="370"/>
    </location>
</feature>
<feature type="strand" evidence="9">
    <location>
        <begin position="374"/>
        <end position="378"/>
    </location>
</feature>
<feature type="helix" evidence="9">
    <location>
        <begin position="384"/>
        <end position="399"/>
    </location>
</feature>
<feature type="helix" evidence="9">
    <location>
        <begin position="412"/>
        <end position="417"/>
    </location>
</feature>
<feature type="helix" evidence="9">
    <location>
        <begin position="429"/>
        <end position="433"/>
    </location>
</feature>
<sequence>MTKKIHINAFEMNCVGHIAHGLWRHPENQRHRYTDLNYWTELAQLLEKGKFDALFLADVVGIYDVYRQSRDTAVREAVQIPVNDPLMLISAMAYVTKHLAFAVTFSTTYEHPYGHARRMSTLDHLTKGRIAWNVVTSHLPSADKNFGIKKILEHDERYDLADEYLEVCYKLWEGSWEDNAVIRDIENNIYTDPSKVHEINHSGKYFEVPGPHLCEPSPQRTPVIYQAGMSERGREFAAKHAECVFLGGKDVETLKFFVDDIRKRAKKYGRNPDHIKMFAGICVIVGKTHDEAMEKLNSFQKYWSLEGHLAHYGGGTGYDLSKYSSNDYIGSISVGEIINNMSKLDGKWFKLSVGTPKKVADEMQYLVEEAGIDGFNLVQYVSPGTFVDFIELVVPELQKRGLYRVDYEEGTYREKLFGKGNYRLPDDHIAARYRNISSNV</sequence>
<comment type="function">
    <text evidence="1 3">Involved in the degradation of long-chain alkanes (PubMed:17372208, PubMed:22526792). Converts alkanes ranging from C(15) to C(36) into their corresponding primary alcohols (PubMed:17372208).</text>
</comment>
<comment type="catalytic activity">
    <reaction evidence="1 2 3">
        <text>a long-chain alkane + FMNH2 + O2 = a long chain fatty alcohol + FMN + H2O + H(+)</text>
        <dbReference type="Rhea" id="RHEA:49060"/>
        <dbReference type="ChEBI" id="CHEBI:15377"/>
        <dbReference type="ChEBI" id="CHEBI:15378"/>
        <dbReference type="ChEBI" id="CHEBI:15379"/>
        <dbReference type="ChEBI" id="CHEBI:17135"/>
        <dbReference type="ChEBI" id="CHEBI:57618"/>
        <dbReference type="ChEBI" id="CHEBI:58210"/>
        <dbReference type="ChEBI" id="CHEBI:83563"/>
        <dbReference type="EC" id="1.14.14.28"/>
    </reaction>
    <physiologicalReaction direction="left-to-right" evidence="1 2 3">
        <dbReference type="Rhea" id="RHEA:49061"/>
    </physiologicalReaction>
</comment>
<comment type="biophysicochemical properties">
    <kinetics>
        <KM evidence="3">9.1 mM for hexadecane</KM>
        <text evidence="3">kcat is 1.3 min(-1) with hexadecane as substrate.</text>
    </kinetics>
    <phDependence>
        <text evidence="3">Optimum pH is 7.5.</text>
    </phDependence>
    <temperatureDependence>
        <text evidence="3">Optimum temperature is 60 degrees Celsius.</text>
    </temperatureDependence>
</comment>
<comment type="subunit">
    <text evidence="2">Homodimer.</text>
</comment>
<comment type="subcellular location">
    <subcellularLocation>
        <location evidence="1">Secreted</location>
    </subcellularLocation>
</comment>
<comment type="induction">
    <text evidence="1">120-fold increase in transcription when crude oil is used as a sole carbon source instead of sucrose.</text>
</comment>
<comment type="biotechnology">
    <text evidence="1 3">Shows particular potential to be used for the treatment of environmental oil pollutions and in other biocatalytic processes (PubMed:17372208, PubMed:22526792). Random- and site-directed mutagenesis were used to generate mutants with increased activity toward hexadecane (PubMed:22526792).</text>
</comment>
<comment type="similarity">
    <text evidence="5">Belongs to the NtaA/SnaA/DszA monooxygenase family.</text>
</comment>
<protein>
    <recommendedName>
        <fullName evidence="4">Long-chain alkane monooxygenase</fullName>
        <ecNumber evidence="1 2 3">1.14.14.28</ecNumber>
    </recommendedName>
    <alternativeName>
        <fullName evidence="5">Long-chain alkane degradation protein A</fullName>
    </alternativeName>
</protein>
<keyword id="KW-0002">3D-structure</keyword>
<keyword id="KW-0285">Flavoprotein</keyword>
<keyword id="KW-0288">FMN</keyword>
<keyword id="KW-0503">Monooxygenase</keyword>
<keyword id="KW-0547">Nucleotide-binding</keyword>
<keyword id="KW-0560">Oxidoreductase</keyword>
<keyword id="KW-0614">Plasmid</keyword>
<keyword id="KW-0964">Secreted</keyword>
<organism>
    <name type="scientific">Geobacillus thermodenitrificans (strain NG80-2)</name>
    <dbReference type="NCBI Taxonomy" id="420246"/>
    <lineage>
        <taxon>Bacteria</taxon>
        <taxon>Bacillati</taxon>
        <taxon>Bacillota</taxon>
        <taxon>Bacilli</taxon>
        <taxon>Bacillales</taxon>
        <taxon>Anoxybacillaceae</taxon>
        <taxon>Geobacillus</taxon>
    </lineage>
</organism>
<proteinExistence type="evidence at protein level"/>
<accession>A4IU28</accession>